<evidence type="ECO:0000255" key="1">
    <source>
        <dbReference type="HAMAP-Rule" id="MF_00524"/>
    </source>
</evidence>
<dbReference type="EC" id="2.7.1.2" evidence="1"/>
<dbReference type="EMBL" id="AL157959">
    <property type="protein sequence ID" value="CAM08747.1"/>
    <property type="molecule type" value="Genomic_DNA"/>
</dbReference>
<dbReference type="RefSeq" id="WP_002216974.1">
    <property type="nucleotide sequence ID" value="NC_003116.1"/>
</dbReference>
<dbReference type="SMR" id="P64253"/>
<dbReference type="EnsemblBacteria" id="CAM08747">
    <property type="protein sequence ID" value="CAM08747"/>
    <property type="gene ID" value="NMA1607"/>
</dbReference>
<dbReference type="KEGG" id="nma:NMA1607"/>
<dbReference type="HOGENOM" id="CLU_042582_1_0_4"/>
<dbReference type="Proteomes" id="UP000000626">
    <property type="component" value="Chromosome"/>
</dbReference>
<dbReference type="GO" id="GO:0005829">
    <property type="term" value="C:cytosol"/>
    <property type="evidence" value="ECO:0007669"/>
    <property type="project" value="TreeGrafter"/>
</dbReference>
<dbReference type="GO" id="GO:0005524">
    <property type="term" value="F:ATP binding"/>
    <property type="evidence" value="ECO:0007669"/>
    <property type="project" value="UniProtKB-UniRule"/>
</dbReference>
<dbReference type="GO" id="GO:0005536">
    <property type="term" value="F:D-glucose binding"/>
    <property type="evidence" value="ECO:0007669"/>
    <property type="project" value="InterPro"/>
</dbReference>
<dbReference type="GO" id="GO:0004340">
    <property type="term" value="F:glucokinase activity"/>
    <property type="evidence" value="ECO:0007669"/>
    <property type="project" value="UniProtKB-UniRule"/>
</dbReference>
<dbReference type="GO" id="GO:0006096">
    <property type="term" value="P:glycolytic process"/>
    <property type="evidence" value="ECO:0007669"/>
    <property type="project" value="UniProtKB-UniRule"/>
</dbReference>
<dbReference type="CDD" id="cd24008">
    <property type="entry name" value="ASKHA_NBD_GLK"/>
    <property type="match status" value="1"/>
</dbReference>
<dbReference type="FunFam" id="3.40.367.20:FF:000002">
    <property type="entry name" value="Glucokinase"/>
    <property type="match status" value="1"/>
</dbReference>
<dbReference type="Gene3D" id="3.30.420.40">
    <property type="match status" value="1"/>
</dbReference>
<dbReference type="Gene3D" id="3.40.367.20">
    <property type="match status" value="1"/>
</dbReference>
<dbReference type="HAMAP" id="MF_00524">
    <property type="entry name" value="Glucokinase"/>
    <property type="match status" value="1"/>
</dbReference>
<dbReference type="InterPro" id="IPR043129">
    <property type="entry name" value="ATPase_NBD"/>
</dbReference>
<dbReference type="InterPro" id="IPR050201">
    <property type="entry name" value="Bacterial_glucokinase"/>
</dbReference>
<dbReference type="InterPro" id="IPR003836">
    <property type="entry name" value="Glucokinase"/>
</dbReference>
<dbReference type="NCBIfam" id="TIGR00749">
    <property type="entry name" value="glk"/>
    <property type="match status" value="1"/>
</dbReference>
<dbReference type="NCBIfam" id="NF001416">
    <property type="entry name" value="PRK00292.1-3"/>
    <property type="match status" value="1"/>
</dbReference>
<dbReference type="PANTHER" id="PTHR47690">
    <property type="entry name" value="GLUCOKINASE"/>
    <property type="match status" value="1"/>
</dbReference>
<dbReference type="PANTHER" id="PTHR47690:SF1">
    <property type="entry name" value="GLUCOKINASE"/>
    <property type="match status" value="1"/>
</dbReference>
<dbReference type="Pfam" id="PF02685">
    <property type="entry name" value="Glucokinase"/>
    <property type="match status" value="1"/>
</dbReference>
<dbReference type="SUPFAM" id="SSF53067">
    <property type="entry name" value="Actin-like ATPase domain"/>
    <property type="match status" value="1"/>
</dbReference>
<accession>P64253</accession>
<accession>A1ISI9</accession>
<accession>Q9JQX3</accession>
<comment type="catalytic activity">
    <reaction evidence="1">
        <text>D-glucose + ATP = D-glucose 6-phosphate + ADP + H(+)</text>
        <dbReference type="Rhea" id="RHEA:17825"/>
        <dbReference type="ChEBI" id="CHEBI:4167"/>
        <dbReference type="ChEBI" id="CHEBI:15378"/>
        <dbReference type="ChEBI" id="CHEBI:30616"/>
        <dbReference type="ChEBI" id="CHEBI:61548"/>
        <dbReference type="ChEBI" id="CHEBI:456216"/>
        <dbReference type="EC" id="2.7.1.2"/>
    </reaction>
</comment>
<comment type="subcellular location">
    <subcellularLocation>
        <location evidence="1">Cytoplasm</location>
    </subcellularLocation>
</comment>
<comment type="similarity">
    <text evidence="1">Belongs to the bacterial glucokinase family.</text>
</comment>
<sequence>MSSTPNKQAGYPRLVADIGGTNARFALETAPRVIEKAAVLPCKDYDTVTDAVRAYLNQSGATAVRHAAFAIANPILGDWVQMTNHHWAFSIETTRQTLGLDTLILLNDFTAQALAVTQTSSKDLMQVGGQKPVEFAPKAVIGPGTGLGVSGLVHSHAGWVALAGEGGHTSFPPFDDMEVLIWQYAKNKYGHVSAERFLSGAGLSLVYEALAAKQKAKPAKLMPSEITEKALSGASPLCRQTLDIFCAMLGTVASNLALTLGARGGVYLCGGIIPRVLEYFKTSPFRSRFENKGRFEAYLAAIPVYVVLSEFPGISGAAAALDNHLRNV</sequence>
<reference key="1">
    <citation type="journal article" date="2000" name="Nature">
        <title>Complete DNA sequence of a serogroup A strain of Neisseria meningitidis Z2491.</title>
        <authorList>
            <person name="Parkhill J."/>
            <person name="Achtman M."/>
            <person name="James K.D."/>
            <person name="Bentley S.D."/>
            <person name="Churcher C.M."/>
            <person name="Klee S.R."/>
            <person name="Morelli G."/>
            <person name="Basham D."/>
            <person name="Brown D."/>
            <person name="Chillingworth T."/>
            <person name="Davies R.M."/>
            <person name="Davis P."/>
            <person name="Devlin K."/>
            <person name="Feltwell T."/>
            <person name="Hamlin N."/>
            <person name="Holroyd S."/>
            <person name="Jagels K."/>
            <person name="Leather S."/>
            <person name="Moule S."/>
            <person name="Mungall K.L."/>
            <person name="Quail M.A."/>
            <person name="Rajandream M.A."/>
            <person name="Rutherford K.M."/>
            <person name="Simmonds M."/>
            <person name="Skelton J."/>
            <person name="Whitehead S."/>
            <person name="Spratt B.G."/>
            <person name="Barrell B.G."/>
        </authorList>
    </citation>
    <scope>NUCLEOTIDE SEQUENCE [LARGE SCALE GENOMIC DNA]</scope>
    <source>
        <strain>DSM 15465 / Z2491</strain>
    </source>
</reference>
<organism>
    <name type="scientific">Neisseria meningitidis serogroup A / serotype 4A (strain DSM 15465 / Z2491)</name>
    <dbReference type="NCBI Taxonomy" id="122587"/>
    <lineage>
        <taxon>Bacteria</taxon>
        <taxon>Pseudomonadati</taxon>
        <taxon>Pseudomonadota</taxon>
        <taxon>Betaproteobacteria</taxon>
        <taxon>Neisseriales</taxon>
        <taxon>Neisseriaceae</taxon>
        <taxon>Neisseria</taxon>
    </lineage>
</organism>
<name>GLK_NEIMA</name>
<proteinExistence type="inferred from homology"/>
<keyword id="KW-0067">ATP-binding</keyword>
<keyword id="KW-0963">Cytoplasm</keyword>
<keyword id="KW-0324">Glycolysis</keyword>
<keyword id="KW-0418">Kinase</keyword>
<keyword id="KW-0547">Nucleotide-binding</keyword>
<keyword id="KW-0808">Transferase</keyword>
<gene>
    <name evidence="1" type="primary">glk</name>
    <name type="ordered locus">NMA1607</name>
</gene>
<feature type="chain" id="PRO_0000215130" description="Glucokinase">
    <location>
        <begin position="1"/>
        <end position="328"/>
    </location>
</feature>
<feature type="binding site" evidence="1">
    <location>
        <begin position="16"/>
        <end position="21"/>
    </location>
    <ligand>
        <name>ATP</name>
        <dbReference type="ChEBI" id="CHEBI:30616"/>
    </ligand>
</feature>
<protein>
    <recommendedName>
        <fullName evidence="1">Glucokinase</fullName>
        <ecNumber evidence="1">2.7.1.2</ecNumber>
    </recommendedName>
    <alternativeName>
        <fullName evidence="1">Glucose kinase</fullName>
    </alternativeName>
</protein>